<gene>
    <name evidence="1" type="primary">nuoH</name>
    <name type="ordered locus">LBL_2572</name>
</gene>
<reference key="1">
    <citation type="journal article" date="2006" name="Proc. Natl. Acad. Sci. U.S.A.">
        <title>Genome reduction in Leptospira borgpetersenii reflects limited transmission potential.</title>
        <authorList>
            <person name="Bulach D.M."/>
            <person name="Zuerner R.L."/>
            <person name="Wilson P."/>
            <person name="Seemann T."/>
            <person name="McGrath A."/>
            <person name="Cullen P.A."/>
            <person name="Davis J."/>
            <person name="Johnson M."/>
            <person name="Kuczek E."/>
            <person name="Alt D.P."/>
            <person name="Peterson-Burch B."/>
            <person name="Coppel R.L."/>
            <person name="Rood J.I."/>
            <person name="Davies J.K."/>
            <person name="Adler B."/>
        </authorList>
    </citation>
    <scope>NUCLEOTIDE SEQUENCE [LARGE SCALE GENOMIC DNA]</scope>
    <source>
        <strain>L550</strain>
    </source>
</reference>
<protein>
    <recommendedName>
        <fullName evidence="1">NADH-quinone oxidoreductase subunit H</fullName>
        <ecNumber evidence="1">7.1.1.-</ecNumber>
    </recommendedName>
    <alternativeName>
        <fullName evidence="1">NADH dehydrogenase I subunit H</fullName>
    </alternativeName>
    <alternativeName>
        <fullName evidence="1">NDH-1 subunit H</fullName>
    </alternativeName>
</protein>
<comment type="function">
    <text evidence="1">NDH-1 shuttles electrons from NADH, via FMN and iron-sulfur (Fe-S) centers, to quinones in the respiratory chain. The immediate electron acceptor for the enzyme in this species is believed to be ubiquinone. Couples the redox reaction to proton translocation (for every two electrons transferred, four hydrogen ions are translocated across the cytoplasmic membrane), and thus conserves the redox energy in a proton gradient. This subunit may bind ubiquinone.</text>
</comment>
<comment type="catalytic activity">
    <reaction evidence="1">
        <text>a quinone + NADH + 5 H(+)(in) = a quinol + NAD(+) + 4 H(+)(out)</text>
        <dbReference type="Rhea" id="RHEA:57888"/>
        <dbReference type="ChEBI" id="CHEBI:15378"/>
        <dbReference type="ChEBI" id="CHEBI:24646"/>
        <dbReference type="ChEBI" id="CHEBI:57540"/>
        <dbReference type="ChEBI" id="CHEBI:57945"/>
        <dbReference type="ChEBI" id="CHEBI:132124"/>
    </reaction>
</comment>
<comment type="subunit">
    <text evidence="1">NDH-1 is composed of 14 different subunits. Subunits NuoA, H, J, K, L, M, N constitute the membrane sector of the complex.</text>
</comment>
<comment type="subcellular location">
    <subcellularLocation>
        <location evidence="1">Cell inner membrane</location>
        <topology evidence="1">Multi-pass membrane protein</topology>
    </subcellularLocation>
</comment>
<comment type="similarity">
    <text evidence="1">Belongs to the complex I subunit 1 family.</text>
</comment>
<evidence type="ECO:0000255" key="1">
    <source>
        <dbReference type="HAMAP-Rule" id="MF_01350"/>
    </source>
</evidence>
<name>NUOH_LEPBL</name>
<sequence>MNWNEILFWLLKSGLFFFILITACAYYTLAERKVAGFIQDRKGPNRAGIWGLLQPLADGIKFLTKEEVFPTQVNKIMYLIAPAISMTCAIMAWSVVPLGGRIPLPQWLQDRTGLVFLDLQIANPDTGILFLFAISSLAVYGIIIAGWASNNKYSLLGAIRSTAQMISYELPLSMSVVSIVILTGSLKLTDISASQAGLWNIFKLPGFIAFCLFVVAMFAETNRLPFDLAEAESELVVGFHTEYGAFKFALFFIAEYMNMITMSCVVTLLFFGGYQVPFGILEGHVLQSLFGLFFFLGKVLFFTFLFVWVRWTLPRFRYDQLMSLGWKKLIPWAVLNILIASLYIQF</sequence>
<feature type="chain" id="PRO_0000298821" description="NADH-quinone oxidoreductase subunit H">
    <location>
        <begin position="1"/>
        <end position="346"/>
    </location>
</feature>
<feature type="transmembrane region" description="Helical" evidence="1">
    <location>
        <begin position="6"/>
        <end position="26"/>
    </location>
</feature>
<feature type="transmembrane region" description="Helical" evidence="1">
    <location>
        <begin position="76"/>
        <end position="96"/>
    </location>
</feature>
<feature type="transmembrane region" description="Helical" evidence="1">
    <location>
        <begin position="128"/>
        <end position="148"/>
    </location>
</feature>
<feature type="transmembrane region" description="Helical" evidence="1">
    <location>
        <begin position="166"/>
        <end position="186"/>
    </location>
</feature>
<feature type="transmembrane region" description="Helical" evidence="1">
    <location>
        <begin position="198"/>
        <end position="218"/>
    </location>
</feature>
<feature type="transmembrane region" description="Helical" evidence="1">
    <location>
        <begin position="260"/>
        <end position="280"/>
    </location>
</feature>
<feature type="transmembrane region" description="Helical" evidence="1">
    <location>
        <begin position="289"/>
        <end position="309"/>
    </location>
</feature>
<feature type="transmembrane region" description="Helical" evidence="1">
    <location>
        <begin position="324"/>
        <end position="344"/>
    </location>
</feature>
<accession>Q04YB0</accession>
<dbReference type="EC" id="7.1.1.-" evidence="1"/>
<dbReference type="EMBL" id="CP000348">
    <property type="protein sequence ID" value="ABJ79935.1"/>
    <property type="molecule type" value="Genomic_DNA"/>
</dbReference>
<dbReference type="RefSeq" id="WP_002735619.1">
    <property type="nucleotide sequence ID" value="NC_008508.1"/>
</dbReference>
<dbReference type="SMR" id="Q04YB0"/>
<dbReference type="GeneID" id="61172704"/>
<dbReference type="KEGG" id="lbl:LBL_2572"/>
<dbReference type="HOGENOM" id="CLU_015134_0_1_12"/>
<dbReference type="GO" id="GO:0005886">
    <property type="term" value="C:plasma membrane"/>
    <property type="evidence" value="ECO:0007669"/>
    <property type="project" value="UniProtKB-SubCell"/>
</dbReference>
<dbReference type="GO" id="GO:0003954">
    <property type="term" value="F:NADH dehydrogenase activity"/>
    <property type="evidence" value="ECO:0007669"/>
    <property type="project" value="TreeGrafter"/>
</dbReference>
<dbReference type="GO" id="GO:0016655">
    <property type="term" value="F:oxidoreductase activity, acting on NAD(P)H, quinone or similar compound as acceptor"/>
    <property type="evidence" value="ECO:0007669"/>
    <property type="project" value="UniProtKB-UniRule"/>
</dbReference>
<dbReference type="GO" id="GO:0048038">
    <property type="term" value="F:quinone binding"/>
    <property type="evidence" value="ECO:0007669"/>
    <property type="project" value="UniProtKB-KW"/>
</dbReference>
<dbReference type="GO" id="GO:0009060">
    <property type="term" value="P:aerobic respiration"/>
    <property type="evidence" value="ECO:0007669"/>
    <property type="project" value="TreeGrafter"/>
</dbReference>
<dbReference type="HAMAP" id="MF_01350">
    <property type="entry name" value="NDH1_NuoH"/>
    <property type="match status" value="1"/>
</dbReference>
<dbReference type="InterPro" id="IPR001694">
    <property type="entry name" value="NADH_UbQ_OxRdtase_su1/FPO"/>
</dbReference>
<dbReference type="InterPro" id="IPR018086">
    <property type="entry name" value="NADH_UbQ_OxRdtase_su1_CS"/>
</dbReference>
<dbReference type="NCBIfam" id="NF004741">
    <property type="entry name" value="PRK06076.1-2"/>
    <property type="match status" value="1"/>
</dbReference>
<dbReference type="PANTHER" id="PTHR11432">
    <property type="entry name" value="NADH DEHYDROGENASE SUBUNIT 1"/>
    <property type="match status" value="1"/>
</dbReference>
<dbReference type="PANTHER" id="PTHR11432:SF3">
    <property type="entry name" value="NADH-UBIQUINONE OXIDOREDUCTASE CHAIN 1"/>
    <property type="match status" value="1"/>
</dbReference>
<dbReference type="Pfam" id="PF00146">
    <property type="entry name" value="NADHdh"/>
    <property type="match status" value="1"/>
</dbReference>
<dbReference type="PROSITE" id="PS00668">
    <property type="entry name" value="COMPLEX1_ND1_2"/>
    <property type="match status" value="1"/>
</dbReference>
<organism>
    <name type="scientific">Leptospira borgpetersenii serovar Hardjo-bovis (strain L550)</name>
    <dbReference type="NCBI Taxonomy" id="355276"/>
    <lineage>
        <taxon>Bacteria</taxon>
        <taxon>Pseudomonadati</taxon>
        <taxon>Spirochaetota</taxon>
        <taxon>Spirochaetia</taxon>
        <taxon>Leptospirales</taxon>
        <taxon>Leptospiraceae</taxon>
        <taxon>Leptospira</taxon>
    </lineage>
</organism>
<proteinExistence type="inferred from homology"/>
<keyword id="KW-0997">Cell inner membrane</keyword>
<keyword id="KW-1003">Cell membrane</keyword>
<keyword id="KW-0472">Membrane</keyword>
<keyword id="KW-0520">NAD</keyword>
<keyword id="KW-0874">Quinone</keyword>
<keyword id="KW-1278">Translocase</keyword>
<keyword id="KW-0812">Transmembrane</keyword>
<keyword id="KW-1133">Transmembrane helix</keyword>
<keyword id="KW-0830">Ubiquinone</keyword>